<keyword id="KW-0007">Acetylation</keyword>
<keyword id="KW-0067">ATP-binding</keyword>
<keyword id="KW-0963">Cytoplasm</keyword>
<keyword id="KW-0324">Glycolysis</keyword>
<keyword id="KW-0418">Kinase</keyword>
<keyword id="KW-0460">Magnesium</keyword>
<keyword id="KW-0479">Metal-binding</keyword>
<keyword id="KW-0547">Nucleotide-binding</keyword>
<keyword id="KW-0597">Phosphoprotein</keyword>
<keyword id="KW-1267">Proteomics identification</keyword>
<keyword id="KW-1185">Reference proteome</keyword>
<keyword id="KW-0808">Transferase</keyword>
<sequence length="417" mass="44796">MSLSKKLTLDKLDVRGKRVIMRVDFNVPMKKNQITNNQRIKASIPSIKYCLDNGAKAVVLMSHLGRPDGVPMPDKYSLAPVAVELKSLLGKDVLFLKDCVGAEVEKACANPAPGSVILLENLRFHVEEEGKGQDPSGKKIKAEPDKIEAFRASLSKLGDVYVNDAFGTAHRAHSSMVGVNLPHKASGFLMKKELDYFAKALENPVRPFLAILGGAKVADKIQLIKNMLDKVNEMIIGGGMAYTFLKVLNNMEIGASLFDEEGAKIVKDIMAKAQKNGVRITFPVDFVTGDKFDENAQVGKATVASGISPGWMGLDCGPESNKNHAQVVAQARLIVWNGPLGVFEWDAFAKGTKALMDEIVKATSKGCITVIGGGDTATCCAKWNTEDKVSHVSTGGGASLELLEGKILPGVEALSNM</sequence>
<name>PGK2_HUMAN</name>
<gene>
    <name type="primary">PGK2</name>
    <name type="synonym">PGKB</name>
</gene>
<organism>
    <name type="scientific">Homo sapiens</name>
    <name type="common">Human</name>
    <dbReference type="NCBI Taxonomy" id="9606"/>
    <lineage>
        <taxon>Eukaryota</taxon>
        <taxon>Metazoa</taxon>
        <taxon>Chordata</taxon>
        <taxon>Craniata</taxon>
        <taxon>Vertebrata</taxon>
        <taxon>Euteleostomi</taxon>
        <taxon>Mammalia</taxon>
        <taxon>Eutheria</taxon>
        <taxon>Euarchontoglires</taxon>
        <taxon>Primates</taxon>
        <taxon>Haplorrhini</taxon>
        <taxon>Catarrhini</taxon>
        <taxon>Hominidae</taxon>
        <taxon>Homo</taxon>
    </lineage>
</organism>
<evidence type="ECO:0000250" key="1"/>
<evidence type="ECO:0000250" key="2">
    <source>
        <dbReference type="UniProtKB" id="P00558"/>
    </source>
</evidence>
<evidence type="ECO:0000250" key="3">
    <source>
        <dbReference type="UniProtKB" id="P09041"/>
    </source>
</evidence>
<evidence type="ECO:0000250" key="4">
    <source>
        <dbReference type="UniProtKB" id="Q7SIB7"/>
    </source>
</evidence>
<evidence type="ECO:0000269" key="5">
    <source>
    </source>
</evidence>
<evidence type="ECO:0000305" key="6"/>
<accession>P07205</accession>
<accession>B2R6Y8</accession>
<accession>Q9H107</accession>
<proteinExistence type="evidence at protein level"/>
<dbReference type="EC" id="2.7.2.3" evidence="3"/>
<dbReference type="EMBL" id="X05246">
    <property type="protein sequence ID" value="CAA28872.1"/>
    <property type="molecule type" value="Genomic_DNA"/>
</dbReference>
<dbReference type="EMBL" id="AK312770">
    <property type="protein sequence ID" value="BAG35635.1"/>
    <property type="molecule type" value="mRNA"/>
</dbReference>
<dbReference type="EMBL" id="AL121974">
    <property type="status" value="NOT_ANNOTATED_CDS"/>
    <property type="molecule type" value="Genomic_DNA"/>
</dbReference>
<dbReference type="EMBL" id="BC038843">
    <property type="protein sequence ID" value="AAH38843.1"/>
    <property type="molecule type" value="mRNA"/>
</dbReference>
<dbReference type="CCDS" id="CCDS4930.1"/>
<dbReference type="PIR" id="A24030">
    <property type="entry name" value="A24030"/>
</dbReference>
<dbReference type="PIR" id="A27816">
    <property type="entry name" value="A27816"/>
</dbReference>
<dbReference type="RefSeq" id="NP_620061.2">
    <property type="nucleotide sequence ID" value="NM_138733.4"/>
</dbReference>
<dbReference type="SMR" id="P07205"/>
<dbReference type="BioGRID" id="111253">
    <property type="interactions" value="64"/>
</dbReference>
<dbReference type="FunCoup" id="P07205">
    <property type="interactions" value="765"/>
</dbReference>
<dbReference type="IntAct" id="P07205">
    <property type="interactions" value="32"/>
</dbReference>
<dbReference type="MINT" id="P07205"/>
<dbReference type="STRING" id="9606.ENSP00000305995"/>
<dbReference type="BindingDB" id="P07205"/>
<dbReference type="ChEMBL" id="CHEMBL2096677"/>
<dbReference type="DrugBank" id="DB00787">
    <property type="generic name" value="Acyclovir"/>
</dbReference>
<dbReference type="GlyGen" id="P07205">
    <property type="glycosylation" value="1 site, 1 O-linked glycan (1 site)"/>
</dbReference>
<dbReference type="iPTMnet" id="P07205"/>
<dbReference type="PhosphoSitePlus" id="P07205"/>
<dbReference type="SwissPalm" id="P07205"/>
<dbReference type="BioMuta" id="PGK2"/>
<dbReference type="DMDM" id="21264485"/>
<dbReference type="jPOST" id="P07205"/>
<dbReference type="MassIVE" id="P07205"/>
<dbReference type="PaxDb" id="9606-ENSP00000305995"/>
<dbReference type="PeptideAtlas" id="P07205"/>
<dbReference type="PRIDE" id="P07205"/>
<dbReference type="ProteomicsDB" id="51974"/>
<dbReference type="Pumba" id="P07205"/>
<dbReference type="Antibodypedia" id="30847">
    <property type="antibodies" value="244 antibodies from 29 providers"/>
</dbReference>
<dbReference type="DNASU" id="5232"/>
<dbReference type="Ensembl" id="ENST00000304801.6">
    <property type="protein sequence ID" value="ENSP00000305995.3"/>
    <property type="gene ID" value="ENSG00000170950.6"/>
</dbReference>
<dbReference type="GeneID" id="5232"/>
<dbReference type="KEGG" id="hsa:5232"/>
<dbReference type="MANE-Select" id="ENST00000304801.6">
    <property type="protein sequence ID" value="ENSP00000305995.3"/>
    <property type="RefSeq nucleotide sequence ID" value="NM_138733.5"/>
    <property type="RefSeq protein sequence ID" value="NP_620061.2"/>
</dbReference>
<dbReference type="UCSC" id="uc003ozu.4">
    <property type="organism name" value="human"/>
</dbReference>
<dbReference type="AGR" id="HGNC:8898"/>
<dbReference type="CTD" id="5232"/>
<dbReference type="DisGeNET" id="5232"/>
<dbReference type="GeneCards" id="PGK2"/>
<dbReference type="HGNC" id="HGNC:8898">
    <property type="gene designation" value="PGK2"/>
</dbReference>
<dbReference type="HPA" id="ENSG00000170950">
    <property type="expression patterns" value="Tissue enriched (testis)"/>
</dbReference>
<dbReference type="MIM" id="172270">
    <property type="type" value="gene"/>
</dbReference>
<dbReference type="neXtProt" id="NX_P07205"/>
<dbReference type="OpenTargets" id="ENSG00000170950"/>
<dbReference type="PharmGKB" id="PA33237"/>
<dbReference type="VEuPathDB" id="HostDB:ENSG00000170950"/>
<dbReference type="eggNOG" id="KOG1367">
    <property type="taxonomic scope" value="Eukaryota"/>
</dbReference>
<dbReference type="GeneTree" id="ENSGT00390000008820"/>
<dbReference type="HOGENOM" id="CLU_025427_0_0_1"/>
<dbReference type="InParanoid" id="P07205"/>
<dbReference type="OMA" id="GPETNKK"/>
<dbReference type="OrthoDB" id="275353at2759"/>
<dbReference type="PAN-GO" id="P07205">
    <property type="GO annotations" value="7 GO annotations based on evolutionary models"/>
</dbReference>
<dbReference type="PhylomeDB" id="P07205"/>
<dbReference type="TreeFam" id="TF300489"/>
<dbReference type="BioCyc" id="MetaCyc:HS10215-MONOMER"/>
<dbReference type="BRENDA" id="2.7.2.3">
    <property type="organism ID" value="2681"/>
</dbReference>
<dbReference type="PathwayCommons" id="P07205"/>
<dbReference type="Reactome" id="R-HSA-70171">
    <property type="pathway name" value="Glycolysis"/>
</dbReference>
<dbReference type="Reactome" id="R-HSA-70263">
    <property type="pathway name" value="Gluconeogenesis"/>
</dbReference>
<dbReference type="SignaLink" id="P07205"/>
<dbReference type="SIGNOR" id="P07205"/>
<dbReference type="UniPathway" id="UPA00109">
    <property type="reaction ID" value="UER00185"/>
</dbReference>
<dbReference type="BioGRID-ORCS" id="5232">
    <property type="hits" value="25 hits in 1143 CRISPR screens"/>
</dbReference>
<dbReference type="CD-CODE" id="91857CE7">
    <property type="entry name" value="Nucleolus"/>
</dbReference>
<dbReference type="GenomeRNAi" id="5232"/>
<dbReference type="Pharos" id="P07205">
    <property type="development level" value="Tbio"/>
</dbReference>
<dbReference type="PRO" id="PR:P07205"/>
<dbReference type="Proteomes" id="UP000005640">
    <property type="component" value="Chromosome 6"/>
</dbReference>
<dbReference type="RNAct" id="P07205">
    <property type="molecule type" value="protein"/>
</dbReference>
<dbReference type="Bgee" id="ENSG00000170950">
    <property type="expression patterns" value="Expressed in sperm and 59 other cell types or tissues"/>
</dbReference>
<dbReference type="ExpressionAtlas" id="P07205">
    <property type="expression patterns" value="baseline and differential"/>
</dbReference>
<dbReference type="GO" id="GO:0005829">
    <property type="term" value="C:cytosol"/>
    <property type="evidence" value="ECO:0000318"/>
    <property type="project" value="GO_Central"/>
</dbReference>
<dbReference type="GO" id="GO:0070062">
    <property type="term" value="C:extracellular exosome"/>
    <property type="evidence" value="ECO:0007005"/>
    <property type="project" value="UniProtKB"/>
</dbReference>
<dbReference type="GO" id="GO:0005634">
    <property type="term" value="C:nucleus"/>
    <property type="evidence" value="ECO:0007005"/>
    <property type="project" value="UniProtKB"/>
</dbReference>
<dbReference type="GO" id="GO:0035686">
    <property type="term" value="C:sperm fibrous sheath"/>
    <property type="evidence" value="ECO:0000318"/>
    <property type="project" value="GO_Central"/>
</dbReference>
<dbReference type="GO" id="GO:0043531">
    <property type="term" value="F:ADP binding"/>
    <property type="evidence" value="ECO:0000318"/>
    <property type="project" value="GO_Central"/>
</dbReference>
<dbReference type="GO" id="GO:0005524">
    <property type="term" value="F:ATP binding"/>
    <property type="evidence" value="ECO:0000250"/>
    <property type="project" value="UniProtKB"/>
</dbReference>
<dbReference type="GO" id="GO:0046872">
    <property type="term" value="F:metal ion binding"/>
    <property type="evidence" value="ECO:0007669"/>
    <property type="project" value="UniProtKB-KW"/>
</dbReference>
<dbReference type="GO" id="GO:0004618">
    <property type="term" value="F:phosphoglycerate kinase activity"/>
    <property type="evidence" value="ECO:0000269"/>
    <property type="project" value="Reactome"/>
</dbReference>
<dbReference type="GO" id="GO:0061621">
    <property type="term" value="P:canonical glycolysis"/>
    <property type="evidence" value="ECO:0000304"/>
    <property type="project" value="Reactome"/>
</dbReference>
<dbReference type="GO" id="GO:0030317">
    <property type="term" value="P:flagellated sperm motility"/>
    <property type="evidence" value="ECO:0007669"/>
    <property type="project" value="Ensembl"/>
</dbReference>
<dbReference type="GO" id="GO:0006094">
    <property type="term" value="P:gluconeogenesis"/>
    <property type="evidence" value="ECO:0000318"/>
    <property type="project" value="GO_Central"/>
</dbReference>
<dbReference type="GO" id="GO:0006096">
    <property type="term" value="P:glycolytic process"/>
    <property type="evidence" value="ECO:0000318"/>
    <property type="project" value="GO_Central"/>
</dbReference>
<dbReference type="GO" id="GO:0016310">
    <property type="term" value="P:phosphorylation"/>
    <property type="evidence" value="ECO:0000303"/>
    <property type="project" value="UniProtKB"/>
</dbReference>
<dbReference type="CDD" id="cd00318">
    <property type="entry name" value="Phosphoglycerate_kinase"/>
    <property type="match status" value="1"/>
</dbReference>
<dbReference type="FunFam" id="3.40.50.1260:FF:000019">
    <property type="entry name" value="Phosphoglycerate kinase 1"/>
    <property type="match status" value="1"/>
</dbReference>
<dbReference type="FunFam" id="3.40.50.1260:FF:000031">
    <property type="entry name" value="Phosphoglycerate kinase 1"/>
    <property type="match status" value="1"/>
</dbReference>
<dbReference type="Gene3D" id="3.40.50.1260">
    <property type="entry name" value="Phosphoglycerate kinase, N-terminal domain"/>
    <property type="match status" value="3"/>
</dbReference>
<dbReference type="HAMAP" id="MF_00145">
    <property type="entry name" value="Phosphoglyc_kinase"/>
    <property type="match status" value="1"/>
</dbReference>
<dbReference type="InterPro" id="IPR001576">
    <property type="entry name" value="Phosphoglycerate_kinase"/>
</dbReference>
<dbReference type="InterPro" id="IPR015911">
    <property type="entry name" value="Phosphoglycerate_kinase_CS"/>
</dbReference>
<dbReference type="InterPro" id="IPR015824">
    <property type="entry name" value="Phosphoglycerate_kinase_N"/>
</dbReference>
<dbReference type="InterPro" id="IPR036043">
    <property type="entry name" value="Phosphoglycerate_kinase_sf"/>
</dbReference>
<dbReference type="PANTHER" id="PTHR11406">
    <property type="entry name" value="PHOSPHOGLYCERATE KINASE"/>
    <property type="match status" value="1"/>
</dbReference>
<dbReference type="PANTHER" id="PTHR11406:SF10">
    <property type="entry name" value="PHOSPHOGLYCERATE KINASE 2"/>
    <property type="match status" value="1"/>
</dbReference>
<dbReference type="Pfam" id="PF00162">
    <property type="entry name" value="PGK"/>
    <property type="match status" value="1"/>
</dbReference>
<dbReference type="PIRSF" id="PIRSF000724">
    <property type="entry name" value="Pgk"/>
    <property type="match status" value="1"/>
</dbReference>
<dbReference type="PRINTS" id="PR00477">
    <property type="entry name" value="PHGLYCKINASE"/>
</dbReference>
<dbReference type="SUPFAM" id="SSF53748">
    <property type="entry name" value="Phosphoglycerate kinase"/>
    <property type="match status" value="1"/>
</dbReference>
<dbReference type="PROSITE" id="PS00111">
    <property type="entry name" value="PGLYCERATE_KINASE"/>
    <property type="match status" value="1"/>
</dbReference>
<protein>
    <recommendedName>
        <fullName>Phosphoglycerate kinase 2</fullName>
        <ecNumber evidence="3">2.7.2.3</ecNumber>
    </recommendedName>
    <alternativeName>
        <fullName>Phosphoglycerate kinase, testis specific</fullName>
    </alternativeName>
</protein>
<reference key="1">
    <citation type="journal article" date="1987" name="Nature">
        <title>Human testis-specific PGK gene lacks introns and possesses characteristics of a processed gene.</title>
        <authorList>
            <person name="McCarrey J.R."/>
            <person name="Thomas K."/>
        </authorList>
    </citation>
    <scope>NUCLEOTIDE SEQUENCE [GENOMIC DNA]</scope>
</reference>
<reference key="2">
    <citation type="journal article" date="2004" name="Nat. Genet.">
        <title>Complete sequencing and characterization of 21,243 full-length human cDNAs.</title>
        <authorList>
            <person name="Ota T."/>
            <person name="Suzuki Y."/>
            <person name="Nishikawa T."/>
            <person name="Otsuki T."/>
            <person name="Sugiyama T."/>
            <person name="Irie R."/>
            <person name="Wakamatsu A."/>
            <person name="Hayashi K."/>
            <person name="Sato H."/>
            <person name="Nagai K."/>
            <person name="Kimura K."/>
            <person name="Makita H."/>
            <person name="Sekine M."/>
            <person name="Obayashi M."/>
            <person name="Nishi T."/>
            <person name="Shibahara T."/>
            <person name="Tanaka T."/>
            <person name="Ishii S."/>
            <person name="Yamamoto J."/>
            <person name="Saito K."/>
            <person name="Kawai Y."/>
            <person name="Isono Y."/>
            <person name="Nakamura Y."/>
            <person name="Nagahari K."/>
            <person name="Murakami K."/>
            <person name="Yasuda T."/>
            <person name="Iwayanagi T."/>
            <person name="Wagatsuma M."/>
            <person name="Shiratori A."/>
            <person name="Sudo H."/>
            <person name="Hosoiri T."/>
            <person name="Kaku Y."/>
            <person name="Kodaira H."/>
            <person name="Kondo H."/>
            <person name="Sugawara M."/>
            <person name="Takahashi M."/>
            <person name="Kanda K."/>
            <person name="Yokoi T."/>
            <person name="Furuya T."/>
            <person name="Kikkawa E."/>
            <person name="Omura Y."/>
            <person name="Abe K."/>
            <person name="Kamihara K."/>
            <person name="Katsuta N."/>
            <person name="Sato K."/>
            <person name="Tanikawa M."/>
            <person name="Yamazaki M."/>
            <person name="Ninomiya K."/>
            <person name="Ishibashi T."/>
            <person name="Yamashita H."/>
            <person name="Murakawa K."/>
            <person name="Fujimori K."/>
            <person name="Tanai H."/>
            <person name="Kimata M."/>
            <person name="Watanabe M."/>
            <person name="Hiraoka S."/>
            <person name="Chiba Y."/>
            <person name="Ishida S."/>
            <person name="Ono Y."/>
            <person name="Takiguchi S."/>
            <person name="Watanabe S."/>
            <person name="Yosida M."/>
            <person name="Hotuta T."/>
            <person name="Kusano J."/>
            <person name="Kanehori K."/>
            <person name="Takahashi-Fujii A."/>
            <person name="Hara H."/>
            <person name="Tanase T.-O."/>
            <person name="Nomura Y."/>
            <person name="Togiya S."/>
            <person name="Komai F."/>
            <person name="Hara R."/>
            <person name="Takeuchi K."/>
            <person name="Arita M."/>
            <person name="Imose N."/>
            <person name="Musashino K."/>
            <person name="Yuuki H."/>
            <person name="Oshima A."/>
            <person name="Sasaki N."/>
            <person name="Aotsuka S."/>
            <person name="Yoshikawa Y."/>
            <person name="Matsunawa H."/>
            <person name="Ichihara T."/>
            <person name="Shiohata N."/>
            <person name="Sano S."/>
            <person name="Moriya S."/>
            <person name="Momiyama H."/>
            <person name="Satoh N."/>
            <person name="Takami S."/>
            <person name="Terashima Y."/>
            <person name="Suzuki O."/>
            <person name="Nakagawa S."/>
            <person name="Senoh A."/>
            <person name="Mizoguchi H."/>
            <person name="Goto Y."/>
            <person name="Shimizu F."/>
            <person name="Wakebe H."/>
            <person name="Hishigaki H."/>
            <person name="Watanabe T."/>
            <person name="Sugiyama A."/>
            <person name="Takemoto M."/>
            <person name="Kawakami B."/>
            <person name="Yamazaki M."/>
            <person name="Watanabe K."/>
            <person name="Kumagai A."/>
            <person name="Itakura S."/>
            <person name="Fukuzumi Y."/>
            <person name="Fujimori Y."/>
            <person name="Komiyama M."/>
            <person name="Tashiro H."/>
            <person name="Tanigami A."/>
            <person name="Fujiwara T."/>
            <person name="Ono T."/>
            <person name="Yamada K."/>
            <person name="Fujii Y."/>
            <person name="Ozaki K."/>
            <person name="Hirao M."/>
            <person name="Ohmori Y."/>
            <person name="Kawabata A."/>
            <person name="Hikiji T."/>
            <person name="Kobatake N."/>
            <person name="Inagaki H."/>
            <person name="Ikema Y."/>
            <person name="Okamoto S."/>
            <person name="Okitani R."/>
            <person name="Kawakami T."/>
            <person name="Noguchi S."/>
            <person name="Itoh T."/>
            <person name="Shigeta K."/>
            <person name="Senba T."/>
            <person name="Matsumura K."/>
            <person name="Nakajima Y."/>
            <person name="Mizuno T."/>
            <person name="Morinaga M."/>
            <person name="Sasaki M."/>
            <person name="Togashi T."/>
            <person name="Oyama M."/>
            <person name="Hata H."/>
            <person name="Watanabe M."/>
            <person name="Komatsu T."/>
            <person name="Mizushima-Sugano J."/>
            <person name="Satoh T."/>
            <person name="Shirai Y."/>
            <person name="Takahashi Y."/>
            <person name="Nakagawa K."/>
            <person name="Okumura K."/>
            <person name="Nagase T."/>
            <person name="Nomura N."/>
            <person name="Kikuchi H."/>
            <person name="Masuho Y."/>
            <person name="Yamashita R."/>
            <person name="Nakai K."/>
            <person name="Yada T."/>
            <person name="Nakamura Y."/>
            <person name="Ohara O."/>
            <person name="Isogai T."/>
            <person name="Sugano S."/>
        </authorList>
    </citation>
    <scope>NUCLEOTIDE SEQUENCE [LARGE SCALE MRNA]</scope>
    <source>
        <tissue>Testis</tissue>
    </source>
</reference>
<reference key="3">
    <citation type="journal article" date="2003" name="Nature">
        <title>The DNA sequence and analysis of human chromosome 6.</title>
        <authorList>
            <person name="Mungall A.J."/>
            <person name="Palmer S.A."/>
            <person name="Sims S.K."/>
            <person name="Edwards C.A."/>
            <person name="Ashurst J.L."/>
            <person name="Wilming L."/>
            <person name="Jones M.C."/>
            <person name="Horton R."/>
            <person name="Hunt S.E."/>
            <person name="Scott C.E."/>
            <person name="Gilbert J.G.R."/>
            <person name="Clamp M.E."/>
            <person name="Bethel G."/>
            <person name="Milne S."/>
            <person name="Ainscough R."/>
            <person name="Almeida J.P."/>
            <person name="Ambrose K.D."/>
            <person name="Andrews T.D."/>
            <person name="Ashwell R.I.S."/>
            <person name="Babbage A.K."/>
            <person name="Bagguley C.L."/>
            <person name="Bailey J."/>
            <person name="Banerjee R."/>
            <person name="Barker D.J."/>
            <person name="Barlow K.F."/>
            <person name="Bates K."/>
            <person name="Beare D.M."/>
            <person name="Beasley H."/>
            <person name="Beasley O."/>
            <person name="Bird C.P."/>
            <person name="Blakey S.E."/>
            <person name="Bray-Allen S."/>
            <person name="Brook J."/>
            <person name="Brown A.J."/>
            <person name="Brown J.Y."/>
            <person name="Burford D.C."/>
            <person name="Burrill W."/>
            <person name="Burton J."/>
            <person name="Carder C."/>
            <person name="Carter N.P."/>
            <person name="Chapman J.C."/>
            <person name="Clark S.Y."/>
            <person name="Clark G."/>
            <person name="Clee C.M."/>
            <person name="Clegg S."/>
            <person name="Cobley V."/>
            <person name="Collier R.E."/>
            <person name="Collins J.E."/>
            <person name="Colman L.K."/>
            <person name="Corby N.R."/>
            <person name="Coville G.J."/>
            <person name="Culley K.M."/>
            <person name="Dhami P."/>
            <person name="Davies J."/>
            <person name="Dunn M."/>
            <person name="Earthrowl M.E."/>
            <person name="Ellington A.E."/>
            <person name="Evans K.A."/>
            <person name="Faulkner L."/>
            <person name="Francis M.D."/>
            <person name="Frankish A."/>
            <person name="Frankland J."/>
            <person name="French L."/>
            <person name="Garner P."/>
            <person name="Garnett J."/>
            <person name="Ghori M.J."/>
            <person name="Gilby L.M."/>
            <person name="Gillson C.J."/>
            <person name="Glithero R.J."/>
            <person name="Grafham D.V."/>
            <person name="Grant M."/>
            <person name="Gribble S."/>
            <person name="Griffiths C."/>
            <person name="Griffiths M.N.D."/>
            <person name="Hall R."/>
            <person name="Halls K.S."/>
            <person name="Hammond S."/>
            <person name="Harley J.L."/>
            <person name="Hart E.A."/>
            <person name="Heath P.D."/>
            <person name="Heathcott R."/>
            <person name="Holmes S.J."/>
            <person name="Howden P.J."/>
            <person name="Howe K.L."/>
            <person name="Howell G.R."/>
            <person name="Huckle E."/>
            <person name="Humphray S.J."/>
            <person name="Humphries M.D."/>
            <person name="Hunt A.R."/>
            <person name="Johnson C.M."/>
            <person name="Joy A.A."/>
            <person name="Kay M."/>
            <person name="Keenan S.J."/>
            <person name="Kimberley A.M."/>
            <person name="King A."/>
            <person name="Laird G.K."/>
            <person name="Langford C."/>
            <person name="Lawlor S."/>
            <person name="Leongamornlert D.A."/>
            <person name="Leversha M."/>
            <person name="Lloyd C.R."/>
            <person name="Lloyd D.M."/>
            <person name="Loveland J.E."/>
            <person name="Lovell J."/>
            <person name="Martin S."/>
            <person name="Mashreghi-Mohammadi M."/>
            <person name="Maslen G.L."/>
            <person name="Matthews L."/>
            <person name="McCann O.T."/>
            <person name="McLaren S.J."/>
            <person name="McLay K."/>
            <person name="McMurray A."/>
            <person name="Moore M.J.F."/>
            <person name="Mullikin J.C."/>
            <person name="Niblett D."/>
            <person name="Nickerson T."/>
            <person name="Novik K.L."/>
            <person name="Oliver K."/>
            <person name="Overton-Larty E.K."/>
            <person name="Parker A."/>
            <person name="Patel R."/>
            <person name="Pearce A.V."/>
            <person name="Peck A.I."/>
            <person name="Phillimore B.J.C.T."/>
            <person name="Phillips S."/>
            <person name="Plumb R.W."/>
            <person name="Porter K.M."/>
            <person name="Ramsey Y."/>
            <person name="Ranby S.A."/>
            <person name="Rice C.M."/>
            <person name="Ross M.T."/>
            <person name="Searle S.M."/>
            <person name="Sehra H.K."/>
            <person name="Sheridan E."/>
            <person name="Skuce C.D."/>
            <person name="Smith S."/>
            <person name="Smith M."/>
            <person name="Spraggon L."/>
            <person name="Squares S.L."/>
            <person name="Steward C.A."/>
            <person name="Sycamore N."/>
            <person name="Tamlyn-Hall G."/>
            <person name="Tester J."/>
            <person name="Theaker A.J."/>
            <person name="Thomas D.W."/>
            <person name="Thorpe A."/>
            <person name="Tracey A."/>
            <person name="Tromans A."/>
            <person name="Tubby B."/>
            <person name="Wall M."/>
            <person name="Wallis J.M."/>
            <person name="West A.P."/>
            <person name="White S.S."/>
            <person name="Whitehead S.L."/>
            <person name="Whittaker H."/>
            <person name="Wild A."/>
            <person name="Willey D.J."/>
            <person name="Wilmer T.E."/>
            <person name="Wood J.M."/>
            <person name="Wray P.W."/>
            <person name="Wyatt J.C."/>
            <person name="Young L."/>
            <person name="Younger R.M."/>
            <person name="Bentley D.R."/>
            <person name="Coulson A."/>
            <person name="Durbin R.M."/>
            <person name="Hubbard T."/>
            <person name="Sulston J.E."/>
            <person name="Dunham I."/>
            <person name="Rogers J."/>
            <person name="Beck S."/>
        </authorList>
    </citation>
    <scope>NUCLEOTIDE SEQUENCE [LARGE SCALE GENOMIC DNA]</scope>
</reference>
<reference key="4">
    <citation type="journal article" date="2004" name="Genome Res.">
        <title>The status, quality, and expansion of the NIH full-length cDNA project: the Mammalian Gene Collection (MGC).</title>
        <authorList>
            <consortium name="The MGC Project Team"/>
        </authorList>
    </citation>
    <scope>NUCLEOTIDE SEQUENCE [LARGE SCALE MRNA]</scope>
    <source>
        <tissue>Brain</tissue>
    </source>
</reference>
<reference key="5">
    <citation type="journal article" date="2009" name="Sci. Signal.">
        <title>Quantitative phosphoproteomic analysis of T cell receptor signaling reveals system-wide modulation of protein-protein interactions.</title>
        <authorList>
            <person name="Mayya V."/>
            <person name="Lundgren D.H."/>
            <person name="Hwang S.-I."/>
            <person name="Rezaul K."/>
            <person name="Wu L."/>
            <person name="Eng J.K."/>
            <person name="Rodionov V."/>
            <person name="Han D.K."/>
        </authorList>
    </citation>
    <scope>IDENTIFICATION BY MASS SPECTROMETRY [LARGE SCALE ANALYSIS]</scope>
    <source>
        <tissue>Leukemic T-cell</tissue>
    </source>
</reference>
<reference key="6">
    <citation type="journal article" date="2011" name="BMC Syst. Biol.">
        <title>Initial characterization of the human central proteome.</title>
        <authorList>
            <person name="Burkard T.R."/>
            <person name="Planyavsky M."/>
            <person name="Kaupe I."/>
            <person name="Breitwieser F.P."/>
            <person name="Buerckstuemmer T."/>
            <person name="Bennett K.L."/>
            <person name="Superti-Furga G."/>
            <person name="Colinge J."/>
        </authorList>
    </citation>
    <scope>IDENTIFICATION BY MASS SPECTROMETRY [LARGE SCALE ANALYSIS]</scope>
</reference>
<reference key="7">
    <citation type="journal article" date="2016" name="Hum. Reprod.">
        <title>Characteristics of testis-specific phosphoglycerate kinase 2 and its association with human sperm quality.</title>
        <authorList>
            <person name="Liu X.X."/>
            <person name="Zhang H."/>
            <person name="Shen X.F."/>
            <person name="Liu F.J."/>
            <person name="Liu J."/>
            <person name="Wang W.J."/>
        </authorList>
    </citation>
    <scope>FUNCTION</scope>
    <scope>TISSUE SPECIFICITY</scope>
</reference>
<comment type="function">
    <text evidence="3 5">Essential for sperm motility and male fertility (PubMed:26677959). Not required for the completion of spermatogenesis (By similarity).</text>
</comment>
<comment type="catalytic activity">
    <reaction evidence="3">
        <text>(2R)-3-phosphoglycerate + ATP = (2R)-3-phospho-glyceroyl phosphate + ADP</text>
        <dbReference type="Rhea" id="RHEA:14801"/>
        <dbReference type="ChEBI" id="CHEBI:30616"/>
        <dbReference type="ChEBI" id="CHEBI:57604"/>
        <dbReference type="ChEBI" id="CHEBI:58272"/>
        <dbReference type="ChEBI" id="CHEBI:456216"/>
        <dbReference type="EC" id="2.7.2.3"/>
    </reaction>
</comment>
<comment type="cofactor">
    <cofactor evidence="2">
        <name>Mg(2+)</name>
        <dbReference type="ChEBI" id="CHEBI:18420"/>
    </cofactor>
</comment>
<comment type="pathway">
    <text>Carbohydrate degradation; glycolysis; pyruvate from D-glyceraldehyde 3-phosphate: step 2/5.</text>
</comment>
<comment type="subunit">
    <text evidence="3">Monomer.</text>
</comment>
<comment type="interaction">
    <interactant intactId="EBI-21572584">
        <id>P07205</id>
    </interactant>
    <interactant intactId="EBI-747509">
        <id>Q9UHH9</id>
        <label>IP6K2</label>
    </interactant>
    <organismsDiffer>false</organismsDiffer>
    <experiments>2</experiments>
</comment>
<comment type="interaction">
    <interactant intactId="EBI-21572584">
        <id>P07205</id>
    </interactant>
    <interactant intactId="EBI-1043135">
        <id>Q9H9A6</id>
        <label>LRRC40</label>
    </interactant>
    <organismsDiffer>false</organismsDiffer>
    <experiments>2</experiments>
</comment>
<comment type="interaction">
    <interactant intactId="EBI-21572584">
        <id>P07205</id>
    </interactant>
    <interactant intactId="EBI-709599">
        <id>P00558</id>
        <label>PGK1</label>
    </interactant>
    <organismsDiffer>false</organismsDiffer>
    <experiments>4</experiments>
</comment>
<comment type="interaction">
    <interactant intactId="EBI-21572584">
        <id>P07205</id>
    </interactant>
    <interactant intactId="EBI-748373">
        <id>Q6PEW1</id>
        <label>ZCCHC12</label>
    </interactant>
    <organismsDiffer>false</organismsDiffer>
    <experiments>2</experiments>
</comment>
<comment type="subcellular location">
    <subcellularLocation>
        <location evidence="1">Cytoplasm</location>
    </subcellularLocation>
</comment>
<comment type="tissue specificity">
    <text evidence="5">Mainly found in round spermatids. Localized on the principle piece in the sperm (at protein level). Testis-specific. Expression significantly decreased in the testis of elderly men.</text>
</comment>
<comment type="similarity">
    <text evidence="6">Belongs to the phosphoglycerate kinase family.</text>
</comment>
<comment type="online information" name="Wikipedia">
    <link uri="https://en.wikipedia.org/wiki/Phosphoglycerate_kinase"/>
    <text>Phosphoglycerate kinase entry</text>
</comment>
<feature type="initiator methionine" description="Removed" evidence="2">
    <location>
        <position position="1"/>
    </location>
</feature>
<feature type="chain" id="PRO_0000145832" description="Phosphoglycerate kinase 2">
    <location>
        <begin position="2"/>
        <end position="417"/>
    </location>
</feature>
<feature type="binding site" evidence="2">
    <location>
        <position position="23"/>
    </location>
    <ligand>
        <name>(2R)-3-phosphoglycerate</name>
        <dbReference type="ChEBI" id="CHEBI:58272"/>
    </ligand>
</feature>
<feature type="binding site" evidence="3">
    <location>
        <position position="24"/>
    </location>
    <ligand>
        <name>(2R)-3-phosphoglycerate</name>
        <dbReference type="ChEBI" id="CHEBI:58272"/>
    </ligand>
</feature>
<feature type="binding site" evidence="2">
    <location>
        <position position="25"/>
    </location>
    <ligand>
        <name>(2R)-3-phosphoglycerate</name>
        <dbReference type="ChEBI" id="CHEBI:58272"/>
    </ligand>
</feature>
<feature type="binding site" evidence="3">
    <location>
        <position position="26"/>
    </location>
    <ligand>
        <name>(2R)-3-phosphoglycerate</name>
        <dbReference type="ChEBI" id="CHEBI:58272"/>
    </ligand>
</feature>
<feature type="binding site" evidence="2">
    <location>
        <position position="38"/>
    </location>
    <ligand>
        <name>(2R)-3-phosphoglycerate</name>
        <dbReference type="ChEBI" id="CHEBI:58272"/>
    </ligand>
</feature>
<feature type="binding site" evidence="3">
    <location>
        <position position="39"/>
    </location>
    <ligand>
        <name>(2R)-3-phosphoglycerate</name>
        <dbReference type="ChEBI" id="CHEBI:58272"/>
    </ligand>
</feature>
<feature type="binding site" evidence="2">
    <location>
        <position position="62"/>
    </location>
    <ligand>
        <name>(2R)-3-phosphoglycerate</name>
        <dbReference type="ChEBI" id="CHEBI:58272"/>
    </ligand>
</feature>
<feature type="binding site" evidence="3">
    <location>
        <position position="63"/>
    </location>
    <ligand>
        <name>(2R)-3-phosphoglycerate</name>
        <dbReference type="ChEBI" id="CHEBI:58272"/>
    </ligand>
</feature>
<feature type="binding site" evidence="2">
    <location>
        <position position="65"/>
    </location>
    <ligand>
        <name>(2R)-3-phosphoglycerate</name>
        <dbReference type="ChEBI" id="CHEBI:58272"/>
    </ligand>
</feature>
<feature type="binding site" evidence="3">
    <location>
        <position position="66"/>
    </location>
    <ligand>
        <name>(2R)-3-phosphoglycerate</name>
        <dbReference type="ChEBI" id="CHEBI:58272"/>
    </ligand>
</feature>
<feature type="binding site" evidence="2">
    <location>
        <position position="122"/>
    </location>
    <ligand>
        <name>(2R)-3-phosphoglycerate</name>
        <dbReference type="ChEBI" id="CHEBI:58272"/>
    </ligand>
</feature>
<feature type="binding site" evidence="3">
    <location>
        <position position="123"/>
    </location>
    <ligand>
        <name>(2R)-3-phosphoglycerate</name>
        <dbReference type="ChEBI" id="CHEBI:58272"/>
    </ligand>
</feature>
<feature type="binding site" evidence="2">
    <location>
        <position position="170"/>
    </location>
    <ligand>
        <name>(2R)-3-phosphoglycerate</name>
        <dbReference type="ChEBI" id="CHEBI:58272"/>
    </ligand>
</feature>
<feature type="binding site" evidence="3">
    <location>
        <position position="171"/>
    </location>
    <ligand>
        <name>(2R)-3-phosphoglycerate</name>
        <dbReference type="ChEBI" id="CHEBI:58272"/>
    </ligand>
</feature>
<feature type="binding site" evidence="2">
    <location>
        <position position="214"/>
    </location>
    <ligand>
        <name>ADP</name>
        <dbReference type="ChEBI" id="CHEBI:456216"/>
    </ligand>
</feature>
<feature type="binding site" evidence="2">
    <location>
        <position position="214"/>
    </location>
    <ligand>
        <name>CDP</name>
        <dbReference type="ChEBI" id="CHEBI:58069"/>
    </ligand>
</feature>
<feature type="binding site" evidence="4">
    <location>
        <position position="215"/>
    </location>
    <ligand>
        <name>AMP</name>
        <dbReference type="ChEBI" id="CHEBI:456215"/>
    </ligand>
</feature>
<feature type="binding site" evidence="3">
    <location>
        <position position="215"/>
    </location>
    <ligand>
        <name>ATP</name>
        <dbReference type="ChEBI" id="CHEBI:30616"/>
    </ligand>
</feature>
<feature type="binding site" evidence="2">
    <location>
        <position position="215"/>
    </location>
    <ligand>
        <name>Mg(2+)</name>
        <dbReference type="ChEBI" id="CHEBI:18420"/>
    </ligand>
</feature>
<feature type="binding site" evidence="4">
    <location>
        <position position="216"/>
    </location>
    <ligand>
        <name>AMP</name>
        <dbReference type="ChEBI" id="CHEBI:456215"/>
    </ligand>
</feature>
<feature type="binding site" evidence="2">
    <location>
        <position position="218"/>
    </location>
    <ligand>
        <name>Mg(2+)</name>
        <dbReference type="ChEBI" id="CHEBI:18420"/>
    </ligand>
</feature>
<feature type="binding site" evidence="2">
    <location>
        <position position="219"/>
    </location>
    <ligand>
        <name>CDP</name>
        <dbReference type="ChEBI" id="CHEBI:58069"/>
    </ligand>
</feature>
<feature type="binding site" evidence="2">
    <location>
        <position position="219"/>
    </location>
    <ligand>
        <name>Mg(2+)</name>
        <dbReference type="ChEBI" id="CHEBI:18420"/>
    </ligand>
</feature>
<feature type="binding site" evidence="4">
    <location>
        <position position="220"/>
    </location>
    <ligand>
        <name>AMP</name>
        <dbReference type="ChEBI" id="CHEBI:456215"/>
    </ligand>
</feature>
<feature type="binding site" evidence="3">
    <location>
        <position position="220"/>
    </location>
    <ligand>
        <name>ATP</name>
        <dbReference type="ChEBI" id="CHEBI:30616"/>
    </ligand>
</feature>
<feature type="binding site" evidence="2">
    <location>
        <position position="238"/>
    </location>
    <ligand>
        <name>ADP</name>
        <dbReference type="ChEBI" id="CHEBI:456216"/>
    </ligand>
</feature>
<feature type="binding site" evidence="2">
    <location>
        <position position="238"/>
    </location>
    <ligand>
        <name>CDP</name>
        <dbReference type="ChEBI" id="CHEBI:58069"/>
    </ligand>
</feature>
<feature type="binding site" evidence="4">
    <location>
        <position position="239"/>
    </location>
    <ligand>
        <name>AMP</name>
        <dbReference type="ChEBI" id="CHEBI:456215"/>
    </ligand>
</feature>
<feature type="binding site" evidence="3">
    <location>
        <position position="239"/>
    </location>
    <ligand>
        <name>ATP</name>
        <dbReference type="ChEBI" id="CHEBI:30616"/>
    </ligand>
</feature>
<feature type="binding site" evidence="4">
    <location>
        <position position="313"/>
    </location>
    <ligand>
        <name>AMP</name>
        <dbReference type="ChEBI" id="CHEBI:456215"/>
    </ligand>
</feature>
<feature type="binding site" evidence="3">
    <location>
        <position position="313"/>
    </location>
    <ligand>
        <name>ATP</name>
        <dbReference type="ChEBI" id="CHEBI:30616"/>
    </ligand>
</feature>
<feature type="binding site" evidence="2">
    <location>
        <position position="338"/>
    </location>
    <ligand>
        <name>CDP</name>
        <dbReference type="ChEBI" id="CHEBI:58069"/>
    </ligand>
</feature>
<feature type="binding site" evidence="2">
    <location>
        <position position="343"/>
    </location>
    <ligand>
        <name>ADP</name>
        <dbReference type="ChEBI" id="CHEBI:456216"/>
    </ligand>
</feature>
<feature type="binding site" evidence="2">
    <location>
        <position position="343"/>
    </location>
    <ligand>
        <name>CDP</name>
        <dbReference type="ChEBI" id="CHEBI:58069"/>
    </ligand>
</feature>
<feature type="binding site" evidence="4">
    <location>
        <position position="344"/>
    </location>
    <ligand>
        <name>AMP</name>
        <dbReference type="ChEBI" id="CHEBI:456215"/>
    </ligand>
</feature>
<feature type="binding site" evidence="3">
    <location>
        <position position="344"/>
    </location>
    <ligand>
        <name>ATP</name>
        <dbReference type="ChEBI" id="CHEBI:30616"/>
    </ligand>
</feature>
<feature type="binding site" evidence="3">
    <location>
        <position position="375"/>
    </location>
    <ligand>
        <name>ATP</name>
        <dbReference type="ChEBI" id="CHEBI:30616"/>
    </ligand>
</feature>
<feature type="binding site" evidence="4">
    <location>
        <position position="375"/>
    </location>
    <ligand>
        <name>Mg(2+)</name>
        <dbReference type="ChEBI" id="CHEBI:18420"/>
    </ligand>
</feature>
<feature type="binding site" evidence="4">
    <location>
        <position position="376"/>
    </location>
    <ligand>
        <name>ATP</name>
        <dbReference type="ChEBI" id="CHEBI:30616"/>
    </ligand>
</feature>
<feature type="modified residue" description="N-acetylserine" evidence="2">
    <location>
        <position position="2"/>
    </location>
</feature>
<feature type="modified residue" description="Phosphoserine" evidence="2">
    <location>
        <position position="2"/>
    </location>
</feature>
<feature type="modified residue" description="Phosphoserine" evidence="2">
    <location>
        <position position="4"/>
    </location>
</feature>
<feature type="modified residue" description="N6-acetyllysine" evidence="2">
    <location>
        <position position="11"/>
    </location>
</feature>
<feature type="modified residue" description="N6-acetyllysine" evidence="2">
    <location>
        <position position="48"/>
    </location>
</feature>
<feature type="modified residue" description="N6-acetyllysine" evidence="2">
    <location>
        <position position="75"/>
    </location>
</feature>
<feature type="modified residue" description="N6-acetyllysine" evidence="2">
    <location>
        <position position="86"/>
    </location>
</feature>
<feature type="modified residue" description="N6-acetyllysine" evidence="2">
    <location>
        <position position="97"/>
    </location>
</feature>
<feature type="modified residue" description="N6-acetyllysine" evidence="2">
    <location>
        <position position="131"/>
    </location>
</feature>
<feature type="modified residue" description="N6-acetyllysine" evidence="2">
    <location>
        <position position="146"/>
    </location>
</feature>
<feature type="modified residue" description="Phosphotyrosine" evidence="2">
    <location>
        <position position="196"/>
    </location>
</feature>
<feature type="modified residue" description="N6-acetyllysine" evidence="2">
    <location>
        <position position="199"/>
    </location>
</feature>
<feature type="modified residue" description="N6-acetyllysine" evidence="2">
    <location>
        <position position="267"/>
    </location>
</feature>
<feature type="modified residue" description="N6-acetyllysine" evidence="2">
    <location>
        <position position="291"/>
    </location>
</feature>
<feature type="sequence conflict" description="In Ref. 1; CAA28872." evidence="6" ref="1">
    <original>G</original>
    <variation>R</variation>
    <location>
        <position position="396"/>
    </location>
</feature>